<proteinExistence type="inferred from homology"/>
<keyword id="KW-0067">ATP-binding</keyword>
<keyword id="KW-0315">Glutamine amidotransferase</keyword>
<keyword id="KW-0436">Ligase</keyword>
<keyword id="KW-0460">Magnesium</keyword>
<keyword id="KW-0479">Metal-binding</keyword>
<keyword id="KW-0547">Nucleotide-binding</keyword>
<keyword id="KW-0665">Pyrimidine biosynthesis</keyword>
<name>PYRG_BACP2</name>
<feature type="chain" id="PRO_1000139385" description="CTP synthase">
    <location>
        <begin position="1"/>
        <end position="535"/>
    </location>
</feature>
<feature type="domain" description="Glutamine amidotransferase type-1" evidence="1">
    <location>
        <begin position="292"/>
        <end position="534"/>
    </location>
</feature>
<feature type="region of interest" description="Amidoligase domain" evidence="1">
    <location>
        <begin position="1"/>
        <end position="267"/>
    </location>
</feature>
<feature type="active site" description="Nucleophile; for glutamine hydrolysis" evidence="1">
    <location>
        <position position="381"/>
    </location>
</feature>
<feature type="active site" evidence="1">
    <location>
        <position position="507"/>
    </location>
</feature>
<feature type="active site" evidence="1">
    <location>
        <position position="509"/>
    </location>
</feature>
<feature type="binding site" evidence="1">
    <location>
        <position position="13"/>
    </location>
    <ligand>
        <name>CTP</name>
        <dbReference type="ChEBI" id="CHEBI:37563"/>
        <note>allosteric inhibitor</note>
    </ligand>
</feature>
<feature type="binding site" evidence="1">
    <location>
        <position position="13"/>
    </location>
    <ligand>
        <name>UTP</name>
        <dbReference type="ChEBI" id="CHEBI:46398"/>
    </ligand>
</feature>
<feature type="binding site" evidence="1">
    <location>
        <begin position="14"/>
        <end position="19"/>
    </location>
    <ligand>
        <name>ATP</name>
        <dbReference type="ChEBI" id="CHEBI:30616"/>
    </ligand>
</feature>
<feature type="binding site" evidence="1">
    <location>
        <position position="54"/>
    </location>
    <ligand>
        <name>L-glutamine</name>
        <dbReference type="ChEBI" id="CHEBI:58359"/>
    </ligand>
</feature>
<feature type="binding site" evidence="1">
    <location>
        <position position="71"/>
    </location>
    <ligand>
        <name>ATP</name>
        <dbReference type="ChEBI" id="CHEBI:30616"/>
    </ligand>
</feature>
<feature type="binding site" evidence="1">
    <location>
        <position position="71"/>
    </location>
    <ligand>
        <name>Mg(2+)</name>
        <dbReference type="ChEBI" id="CHEBI:18420"/>
    </ligand>
</feature>
<feature type="binding site" evidence="1">
    <location>
        <position position="141"/>
    </location>
    <ligand>
        <name>Mg(2+)</name>
        <dbReference type="ChEBI" id="CHEBI:18420"/>
    </ligand>
</feature>
<feature type="binding site" evidence="1">
    <location>
        <begin position="148"/>
        <end position="150"/>
    </location>
    <ligand>
        <name>CTP</name>
        <dbReference type="ChEBI" id="CHEBI:37563"/>
        <note>allosteric inhibitor</note>
    </ligand>
</feature>
<feature type="binding site" evidence="1">
    <location>
        <begin position="188"/>
        <end position="193"/>
    </location>
    <ligand>
        <name>CTP</name>
        <dbReference type="ChEBI" id="CHEBI:37563"/>
        <note>allosteric inhibitor</note>
    </ligand>
</feature>
<feature type="binding site" evidence="1">
    <location>
        <begin position="188"/>
        <end position="193"/>
    </location>
    <ligand>
        <name>UTP</name>
        <dbReference type="ChEBI" id="CHEBI:46398"/>
    </ligand>
</feature>
<feature type="binding site" evidence="1">
    <location>
        <position position="224"/>
    </location>
    <ligand>
        <name>CTP</name>
        <dbReference type="ChEBI" id="CHEBI:37563"/>
        <note>allosteric inhibitor</note>
    </ligand>
</feature>
<feature type="binding site" evidence="1">
    <location>
        <position position="224"/>
    </location>
    <ligand>
        <name>UTP</name>
        <dbReference type="ChEBI" id="CHEBI:46398"/>
    </ligand>
</feature>
<feature type="binding site" evidence="1">
    <location>
        <position position="354"/>
    </location>
    <ligand>
        <name>L-glutamine</name>
        <dbReference type="ChEBI" id="CHEBI:58359"/>
    </ligand>
</feature>
<feature type="binding site" evidence="1">
    <location>
        <begin position="382"/>
        <end position="385"/>
    </location>
    <ligand>
        <name>L-glutamine</name>
        <dbReference type="ChEBI" id="CHEBI:58359"/>
    </ligand>
</feature>
<feature type="binding site" evidence="1">
    <location>
        <position position="405"/>
    </location>
    <ligand>
        <name>L-glutamine</name>
        <dbReference type="ChEBI" id="CHEBI:58359"/>
    </ligand>
</feature>
<feature type="binding site" evidence="1">
    <location>
        <position position="462"/>
    </location>
    <ligand>
        <name>L-glutamine</name>
        <dbReference type="ChEBI" id="CHEBI:58359"/>
    </ligand>
</feature>
<protein>
    <recommendedName>
        <fullName evidence="1">CTP synthase</fullName>
        <ecNumber evidence="1">6.3.4.2</ecNumber>
    </recommendedName>
    <alternativeName>
        <fullName evidence="1">Cytidine 5'-triphosphate synthase</fullName>
    </alternativeName>
    <alternativeName>
        <fullName evidence="1">Cytidine triphosphate synthetase</fullName>
        <shortName evidence="1">CTP synthetase</shortName>
        <shortName evidence="1">CTPS</shortName>
    </alternativeName>
    <alternativeName>
        <fullName evidence="1">UTP--ammonia ligase</fullName>
    </alternativeName>
</protein>
<sequence length="535" mass="59671">MTKYIFVTGGVVSSLGKGITAASLGRLLKNRGMDVTIQKFDPYINVDPGTMSPYQHGEVFVTDDGAETDLDLGHYERFIDINLNKYSNVTTGKIYSTVLKKERRGDYLGGTVQVIPHITNEIKDRVYRAGKETGADVVITEIGGTVGDIESLPFLEAIRQMKSDIGRENVMYIHCTLVPYIRAAGELKTKPTQHSVKELRSLGIQPNVIVVRTEMPMTQDMKDKIALFCDIDTKAVIECQDADTLYSIPLDLQKQGLDKLVCEHMKLDCQDADMTEWTALVDKVQNLSKQVTIGLVGKYVELQDAYISVVESLRHAGYAFDADVQIKWINAEEVTAENMADFAQDVDGIIVPGGFGDRGVEGKIIATQYARENKVPFFGICLGMQVASIEYARNVLGLEGAHSAEIDPETAFPIIDLLPEQKDVDDLGGTLRLGLYPCKLNEDSKAFAAYNDEVVYERHRHRYEFNNEFRQQMEAAGFVFSGTSPDGRLVEIIELKDHPWFLASQFHPEFVSRPTRPQPLFRDFVGASLQASESK</sequence>
<dbReference type="EC" id="6.3.4.2" evidence="1"/>
<dbReference type="EMBL" id="CP000813">
    <property type="protein sequence ID" value="ABV64012.1"/>
    <property type="molecule type" value="Genomic_DNA"/>
</dbReference>
<dbReference type="RefSeq" id="WP_003215143.1">
    <property type="nucleotide sequence ID" value="NZ_VEIS01000002.1"/>
</dbReference>
<dbReference type="SMR" id="A8FIE5"/>
<dbReference type="STRING" id="315750.BPUM_3360"/>
<dbReference type="GeneID" id="5622649"/>
<dbReference type="KEGG" id="bpu:BPUM_3360"/>
<dbReference type="eggNOG" id="COG0504">
    <property type="taxonomic scope" value="Bacteria"/>
</dbReference>
<dbReference type="HOGENOM" id="CLU_011675_5_0_9"/>
<dbReference type="OrthoDB" id="9801107at2"/>
<dbReference type="UniPathway" id="UPA00159">
    <property type="reaction ID" value="UER00277"/>
</dbReference>
<dbReference type="Proteomes" id="UP000001355">
    <property type="component" value="Chromosome"/>
</dbReference>
<dbReference type="GO" id="GO:0005829">
    <property type="term" value="C:cytosol"/>
    <property type="evidence" value="ECO:0007669"/>
    <property type="project" value="TreeGrafter"/>
</dbReference>
<dbReference type="GO" id="GO:0005524">
    <property type="term" value="F:ATP binding"/>
    <property type="evidence" value="ECO:0007669"/>
    <property type="project" value="UniProtKB-KW"/>
</dbReference>
<dbReference type="GO" id="GO:0003883">
    <property type="term" value="F:CTP synthase activity"/>
    <property type="evidence" value="ECO:0007669"/>
    <property type="project" value="UniProtKB-UniRule"/>
</dbReference>
<dbReference type="GO" id="GO:0004359">
    <property type="term" value="F:glutaminase activity"/>
    <property type="evidence" value="ECO:0007669"/>
    <property type="project" value="RHEA"/>
</dbReference>
<dbReference type="GO" id="GO:0042802">
    <property type="term" value="F:identical protein binding"/>
    <property type="evidence" value="ECO:0007669"/>
    <property type="project" value="TreeGrafter"/>
</dbReference>
<dbReference type="GO" id="GO:0046872">
    <property type="term" value="F:metal ion binding"/>
    <property type="evidence" value="ECO:0007669"/>
    <property type="project" value="UniProtKB-KW"/>
</dbReference>
<dbReference type="GO" id="GO:0044210">
    <property type="term" value="P:'de novo' CTP biosynthetic process"/>
    <property type="evidence" value="ECO:0007669"/>
    <property type="project" value="UniProtKB-UniRule"/>
</dbReference>
<dbReference type="GO" id="GO:0019856">
    <property type="term" value="P:pyrimidine nucleobase biosynthetic process"/>
    <property type="evidence" value="ECO:0007669"/>
    <property type="project" value="TreeGrafter"/>
</dbReference>
<dbReference type="CDD" id="cd03113">
    <property type="entry name" value="CTPS_N"/>
    <property type="match status" value="1"/>
</dbReference>
<dbReference type="CDD" id="cd01746">
    <property type="entry name" value="GATase1_CTP_Synthase"/>
    <property type="match status" value="1"/>
</dbReference>
<dbReference type="FunFam" id="3.40.50.300:FF:000009">
    <property type="entry name" value="CTP synthase"/>
    <property type="match status" value="1"/>
</dbReference>
<dbReference type="FunFam" id="3.40.50.880:FF:000002">
    <property type="entry name" value="CTP synthase"/>
    <property type="match status" value="1"/>
</dbReference>
<dbReference type="Gene3D" id="3.40.50.880">
    <property type="match status" value="1"/>
</dbReference>
<dbReference type="Gene3D" id="3.40.50.300">
    <property type="entry name" value="P-loop containing nucleotide triphosphate hydrolases"/>
    <property type="match status" value="1"/>
</dbReference>
<dbReference type="HAMAP" id="MF_01227">
    <property type="entry name" value="PyrG"/>
    <property type="match status" value="1"/>
</dbReference>
<dbReference type="InterPro" id="IPR029062">
    <property type="entry name" value="Class_I_gatase-like"/>
</dbReference>
<dbReference type="InterPro" id="IPR004468">
    <property type="entry name" value="CTP_synthase"/>
</dbReference>
<dbReference type="InterPro" id="IPR017456">
    <property type="entry name" value="CTP_synthase_N"/>
</dbReference>
<dbReference type="InterPro" id="IPR017926">
    <property type="entry name" value="GATASE"/>
</dbReference>
<dbReference type="InterPro" id="IPR033828">
    <property type="entry name" value="GATase1_CTP_Synthase"/>
</dbReference>
<dbReference type="InterPro" id="IPR027417">
    <property type="entry name" value="P-loop_NTPase"/>
</dbReference>
<dbReference type="NCBIfam" id="NF003792">
    <property type="entry name" value="PRK05380.1"/>
    <property type="match status" value="1"/>
</dbReference>
<dbReference type="NCBIfam" id="TIGR00337">
    <property type="entry name" value="PyrG"/>
    <property type="match status" value="1"/>
</dbReference>
<dbReference type="PANTHER" id="PTHR11550">
    <property type="entry name" value="CTP SYNTHASE"/>
    <property type="match status" value="1"/>
</dbReference>
<dbReference type="PANTHER" id="PTHR11550:SF0">
    <property type="entry name" value="CTP SYNTHASE-RELATED"/>
    <property type="match status" value="1"/>
</dbReference>
<dbReference type="Pfam" id="PF06418">
    <property type="entry name" value="CTP_synth_N"/>
    <property type="match status" value="1"/>
</dbReference>
<dbReference type="Pfam" id="PF00117">
    <property type="entry name" value="GATase"/>
    <property type="match status" value="1"/>
</dbReference>
<dbReference type="SUPFAM" id="SSF52317">
    <property type="entry name" value="Class I glutamine amidotransferase-like"/>
    <property type="match status" value="1"/>
</dbReference>
<dbReference type="SUPFAM" id="SSF52540">
    <property type="entry name" value="P-loop containing nucleoside triphosphate hydrolases"/>
    <property type="match status" value="1"/>
</dbReference>
<dbReference type="PROSITE" id="PS51273">
    <property type="entry name" value="GATASE_TYPE_1"/>
    <property type="match status" value="1"/>
</dbReference>
<reference key="1">
    <citation type="journal article" date="2007" name="PLoS ONE">
        <title>Paradoxical DNA repair and peroxide resistance gene conservation in Bacillus pumilus SAFR-032.</title>
        <authorList>
            <person name="Gioia J."/>
            <person name="Yerrapragada S."/>
            <person name="Qin X."/>
            <person name="Jiang H."/>
            <person name="Igboeli O.C."/>
            <person name="Muzny D."/>
            <person name="Dugan-Rocha S."/>
            <person name="Ding Y."/>
            <person name="Hawes A."/>
            <person name="Liu W."/>
            <person name="Perez L."/>
            <person name="Kovar C."/>
            <person name="Dinh H."/>
            <person name="Lee S."/>
            <person name="Nazareth L."/>
            <person name="Blyth P."/>
            <person name="Holder M."/>
            <person name="Buhay C."/>
            <person name="Tirumalai M.R."/>
            <person name="Liu Y."/>
            <person name="Dasgupta I."/>
            <person name="Bokhetache L."/>
            <person name="Fujita M."/>
            <person name="Karouia F."/>
            <person name="Eswara Moorthy P."/>
            <person name="Siefert J."/>
            <person name="Uzman A."/>
            <person name="Buzumbo P."/>
            <person name="Verma A."/>
            <person name="Zwiya H."/>
            <person name="McWilliams B.D."/>
            <person name="Olowu A."/>
            <person name="Clinkenbeard K.D."/>
            <person name="Newcombe D."/>
            <person name="Golebiewski L."/>
            <person name="Petrosino J.F."/>
            <person name="Nicholson W.L."/>
            <person name="Fox G.E."/>
            <person name="Venkateswaran K."/>
            <person name="Highlander S.K."/>
            <person name="Weinstock G.M."/>
        </authorList>
    </citation>
    <scope>NUCLEOTIDE SEQUENCE [LARGE SCALE GENOMIC DNA]</scope>
    <source>
        <strain>SAFR-032</strain>
    </source>
</reference>
<comment type="function">
    <text evidence="1">Catalyzes the ATP-dependent amination of UTP to CTP with either L-glutamine or ammonia as the source of nitrogen. Regulates intracellular CTP levels through interactions with the four ribonucleotide triphosphates.</text>
</comment>
<comment type="catalytic activity">
    <reaction evidence="1">
        <text>UTP + L-glutamine + ATP + H2O = CTP + L-glutamate + ADP + phosphate + 2 H(+)</text>
        <dbReference type="Rhea" id="RHEA:26426"/>
        <dbReference type="ChEBI" id="CHEBI:15377"/>
        <dbReference type="ChEBI" id="CHEBI:15378"/>
        <dbReference type="ChEBI" id="CHEBI:29985"/>
        <dbReference type="ChEBI" id="CHEBI:30616"/>
        <dbReference type="ChEBI" id="CHEBI:37563"/>
        <dbReference type="ChEBI" id="CHEBI:43474"/>
        <dbReference type="ChEBI" id="CHEBI:46398"/>
        <dbReference type="ChEBI" id="CHEBI:58359"/>
        <dbReference type="ChEBI" id="CHEBI:456216"/>
        <dbReference type="EC" id="6.3.4.2"/>
    </reaction>
</comment>
<comment type="catalytic activity">
    <reaction evidence="1">
        <text>L-glutamine + H2O = L-glutamate + NH4(+)</text>
        <dbReference type="Rhea" id="RHEA:15889"/>
        <dbReference type="ChEBI" id="CHEBI:15377"/>
        <dbReference type="ChEBI" id="CHEBI:28938"/>
        <dbReference type="ChEBI" id="CHEBI:29985"/>
        <dbReference type="ChEBI" id="CHEBI:58359"/>
    </reaction>
</comment>
<comment type="catalytic activity">
    <reaction evidence="1">
        <text>UTP + NH4(+) + ATP = CTP + ADP + phosphate + 2 H(+)</text>
        <dbReference type="Rhea" id="RHEA:16597"/>
        <dbReference type="ChEBI" id="CHEBI:15378"/>
        <dbReference type="ChEBI" id="CHEBI:28938"/>
        <dbReference type="ChEBI" id="CHEBI:30616"/>
        <dbReference type="ChEBI" id="CHEBI:37563"/>
        <dbReference type="ChEBI" id="CHEBI:43474"/>
        <dbReference type="ChEBI" id="CHEBI:46398"/>
        <dbReference type="ChEBI" id="CHEBI:456216"/>
    </reaction>
</comment>
<comment type="activity regulation">
    <text evidence="1">Allosterically activated by GTP, when glutamine is the substrate; GTP has no effect on the reaction when ammonia is the substrate. The allosteric effector GTP functions by stabilizing the protein conformation that binds the tetrahedral intermediate(s) formed during glutamine hydrolysis. Inhibited by the product CTP, via allosteric rather than competitive inhibition.</text>
</comment>
<comment type="pathway">
    <text evidence="1">Pyrimidine metabolism; CTP biosynthesis via de novo pathway; CTP from UDP: step 2/2.</text>
</comment>
<comment type="subunit">
    <text evidence="1">Homotetramer.</text>
</comment>
<comment type="miscellaneous">
    <text evidence="1">CTPSs have evolved a hybrid strategy for distinguishing between UTP and CTP. The overlapping regions of the product feedback inhibitory and substrate sites recognize a common feature in both compounds, the triphosphate moiety. To differentiate isosteric substrate and product pyrimidine rings, an additional pocket far from the expected kinase/ligase catalytic site, specifically recognizes the cytosine and ribose portions of the product inhibitor.</text>
</comment>
<comment type="similarity">
    <text evidence="1">Belongs to the CTP synthase family.</text>
</comment>
<organism>
    <name type="scientific">Bacillus pumilus (strain SAFR-032)</name>
    <dbReference type="NCBI Taxonomy" id="315750"/>
    <lineage>
        <taxon>Bacteria</taxon>
        <taxon>Bacillati</taxon>
        <taxon>Bacillota</taxon>
        <taxon>Bacilli</taxon>
        <taxon>Bacillales</taxon>
        <taxon>Bacillaceae</taxon>
        <taxon>Bacillus</taxon>
    </lineage>
</organism>
<evidence type="ECO:0000255" key="1">
    <source>
        <dbReference type="HAMAP-Rule" id="MF_01227"/>
    </source>
</evidence>
<gene>
    <name evidence="1" type="primary">pyrG</name>
    <name type="ordered locus">BPUM_3360</name>
</gene>
<accession>A8FIE5</accession>